<feature type="chain" id="PRO_1000146101" description="Small ribosomal subunit protein eS17">
    <location>
        <begin position="1"/>
        <end position="63"/>
    </location>
</feature>
<proteinExistence type="inferred from homology"/>
<sequence length="63" mass="7349">MGIKPSYIKNFGLELIGRYGDRFTPDFDENKHQVSELTVIDSKRVRNRIAGFITRKVNTKKHL</sequence>
<dbReference type="EMBL" id="CP001338">
    <property type="protein sequence ID" value="ACL15851.1"/>
    <property type="molecule type" value="Genomic_DNA"/>
</dbReference>
<dbReference type="RefSeq" id="WP_012617170.1">
    <property type="nucleotide sequence ID" value="NC_011832.1"/>
</dbReference>
<dbReference type="SMR" id="B8GKG8"/>
<dbReference type="STRING" id="521011.Mpal_0477"/>
<dbReference type="GeneID" id="7272801"/>
<dbReference type="KEGG" id="mpl:Mpal_0477"/>
<dbReference type="eggNOG" id="arCOG01885">
    <property type="taxonomic scope" value="Archaea"/>
</dbReference>
<dbReference type="HOGENOM" id="CLU_176720_1_0_2"/>
<dbReference type="OrthoDB" id="52479at2157"/>
<dbReference type="Proteomes" id="UP000002457">
    <property type="component" value="Chromosome"/>
</dbReference>
<dbReference type="GO" id="GO:0005829">
    <property type="term" value="C:cytosol"/>
    <property type="evidence" value="ECO:0007669"/>
    <property type="project" value="UniProtKB-ARBA"/>
</dbReference>
<dbReference type="GO" id="GO:1990904">
    <property type="term" value="C:ribonucleoprotein complex"/>
    <property type="evidence" value="ECO:0007669"/>
    <property type="project" value="UniProtKB-KW"/>
</dbReference>
<dbReference type="GO" id="GO:0005840">
    <property type="term" value="C:ribosome"/>
    <property type="evidence" value="ECO:0007669"/>
    <property type="project" value="UniProtKB-KW"/>
</dbReference>
<dbReference type="GO" id="GO:0003735">
    <property type="term" value="F:structural constituent of ribosome"/>
    <property type="evidence" value="ECO:0007669"/>
    <property type="project" value="InterPro"/>
</dbReference>
<dbReference type="GO" id="GO:0006412">
    <property type="term" value="P:translation"/>
    <property type="evidence" value="ECO:0007669"/>
    <property type="project" value="UniProtKB-UniRule"/>
</dbReference>
<dbReference type="Gene3D" id="1.10.60.20">
    <property type="entry name" value="Ribosomal protein S17e-like"/>
    <property type="match status" value="1"/>
</dbReference>
<dbReference type="HAMAP" id="MF_00511">
    <property type="entry name" value="Ribosomal_eS17"/>
    <property type="match status" value="1"/>
</dbReference>
<dbReference type="InterPro" id="IPR001210">
    <property type="entry name" value="Ribosomal_eS17"/>
</dbReference>
<dbReference type="InterPro" id="IPR018273">
    <property type="entry name" value="Ribosomal_eS17_CS"/>
</dbReference>
<dbReference type="InterPro" id="IPR036401">
    <property type="entry name" value="Ribosomal_eS17_sf"/>
</dbReference>
<dbReference type="NCBIfam" id="NF002242">
    <property type="entry name" value="PRK01151.1"/>
    <property type="match status" value="1"/>
</dbReference>
<dbReference type="PANTHER" id="PTHR10732">
    <property type="entry name" value="40S RIBOSOMAL PROTEIN S17"/>
    <property type="match status" value="1"/>
</dbReference>
<dbReference type="PANTHER" id="PTHR10732:SF0">
    <property type="entry name" value="40S RIBOSOMAL PROTEIN S17"/>
    <property type="match status" value="1"/>
</dbReference>
<dbReference type="Pfam" id="PF00833">
    <property type="entry name" value="Ribosomal_S17e"/>
    <property type="match status" value="1"/>
</dbReference>
<dbReference type="SUPFAM" id="SSF116820">
    <property type="entry name" value="Rps17e-like"/>
    <property type="match status" value="1"/>
</dbReference>
<dbReference type="PROSITE" id="PS00712">
    <property type="entry name" value="RIBOSOMAL_S17E"/>
    <property type="match status" value="1"/>
</dbReference>
<gene>
    <name evidence="1" type="primary">rps17e</name>
    <name type="ordered locus">Mpal_0477</name>
</gene>
<evidence type="ECO:0000255" key="1">
    <source>
        <dbReference type="HAMAP-Rule" id="MF_00511"/>
    </source>
</evidence>
<evidence type="ECO:0000305" key="2"/>
<reference key="1">
    <citation type="journal article" date="2015" name="Genome Announc.">
        <title>Complete Genome Sequence of Methanosphaerula palustris E1-9CT, a Hydrogenotrophic Methanogen Isolated from a Minerotrophic Fen Peatland.</title>
        <authorList>
            <person name="Cadillo-Quiroz H."/>
            <person name="Browne P."/>
            <person name="Kyrpides N."/>
            <person name="Woyke T."/>
            <person name="Goodwin L."/>
            <person name="Detter C."/>
            <person name="Yavitt J.B."/>
            <person name="Zinder S.H."/>
        </authorList>
    </citation>
    <scope>NUCLEOTIDE SEQUENCE [LARGE SCALE GENOMIC DNA]</scope>
    <source>
        <strain>ATCC BAA-1556 / DSM 19958 / E1-9c</strain>
    </source>
</reference>
<keyword id="KW-1185">Reference proteome</keyword>
<keyword id="KW-0687">Ribonucleoprotein</keyword>
<keyword id="KW-0689">Ribosomal protein</keyword>
<name>RS17E_METPE</name>
<organism>
    <name type="scientific">Methanosphaerula palustris (strain ATCC BAA-1556 / DSM 19958 / E1-9c)</name>
    <dbReference type="NCBI Taxonomy" id="521011"/>
    <lineage>
        <taxon>Archaea</taxon>
        <taxon>Methanobacteriati</taxon>
        <taxon>Methanobacteriota</taxon>
        <taxon>Stenosarchaea group</taxon>
        <taxon>Methanomicrobia</taxon>
        <taxon>Methanomicrobiales</taxon>
        <taxon>Methanoregulaceae</taxon>
        <taxon>Methanosphaerula</taxon>
    </lineage>
</organism>
<comment type="similarity">
    <text evidence="1">Belongs to the eukaryotic ribosomal protein eS17 family.</text>
</comment>
<protein>
    <recommendedName>
        <fullName evidence="1">Small ribosomal subunit protein eS17</fullName>
    </recommendedName>
    <alternativeName>
        <fullName evidence="2">30S ribosomal protein S17e</fullName>
    </alternativeName>
</protein>
<accession>B8GKG8</accession>